<feature type="chain" id="PRO_1000045533" description="Fumarate reductase subunit C">
    <location>
        <begin position="1"/>
        <end position="131"/>
    </location>
</feature>
<feature type="transmembrane region" description="Helical" evidence="1">
    <location>
        <begin position="30"/>
        <end position="50"/>
    </location>
</feature>
<feature type="transmembrane region" description="Helical" evidence="1">
    <location>
        <begin position="63"/>
        <end position="83"/>
    </location>
</feature>
<feature type="transmembrane region" description="Helical" evidence="1">
    <location>
        <begin position="109"/>
        <end position="129"/>
    </location>
</feature>
<sequence>MTTKRKPYVRPMTSTWWKKLPFYRFYMLREGTAVPAVWFSIELIFGLFALKNGPEAWAGFVDFLQNPVIVIINLITLAAALLHTKTWFELAPKAANIIVKDEKIGPEPIIKSLWAVTVVATIVILFVALYW</sequence>
<comment type="function">
    <text evidence="1">Two distinct, membrane-bound, FAD-containing enzymes are responsible for the catalysis of fumarate and succinate interconversion; fumarate reductase is used in anaerobic growth, and succinate dehydrogenase is used in aerobic growth. Anchors the catalytic components of the fumarate reductase complex to the cell inner membrane, binds quinones.</text>
</comment>
<comment type="subunit">
    <text evidence="1">Part of an enzyme complex containing four subunits: a flavoprotein (FrdA), an iron-sulfur protein (FrdB), and two hydrophobic anchor proteins (FrdC and FrdD).</text>
</comment>
<comment type="subcellular location">
    <subcellularLocation>
        <location evidence="1">Cell inner membrane</location>
        <topology evidence="1">Multi-pass membrane protein</topology>
    </subcellularLocation>
</comment>
<comment type="similarity">
    <text evidence="1">Belongs to the FrdC family.</text>
</comment>
<name>FRDC_SHIDS</name>
<organism>
    <name type="scientific">Shigella dysenteriae serotype 1 (strain Sd197)</name>
    <dbReference type="NCBI Taxonomy" id="300267"/>
    <lineage>
        <taxon>Bacteria</taxon>
        <taxon>Pseudomonadati</taxon>
        <taxon>Pseudomonadota</taxon>
        <taxon>Gammaproteobacteria</taxon>
        <taxon>Enterobacterales</taxon>
        <taxon>Enterobacteriaceae</taxon>
        <taxon>Shigella</taxon>
    </lineage>
</organism>
<proteinExistence type="inferred from homology"/>
<accession>Q328H2</accession>
<protein>
    <recommendedName>
        <fullName evidence="1">Fumarate reductase subunit C</fullName>
    </recommendedName>
    <alternativeName>
        <fullName evidence="1">Fumarate reductase 15 kDa hydrophobic protein</fullName>
    </alternativeName>
    <alternativeName>
        <fullName evidence="1">Quinol-fumarate reductase subunit C</fullName>
        <shortName evidence="1">QFR subunit C</shortName>
    </alternativeName>
</protein>
<keyword id="KW-0997">Cell inner membrane</keyword>
<keyword id="KW-1003">Cell membrane</keyword>
<keyword id="KW-0472">Membrane</keyword>
<keyword id="KW-1185">Reference proteome</keyword>
<keyword id="KW-0812">Transmembrane</keyword>
<keyword id="KW-1133">Transmembrane helix</keyword>
<evidence type="ECO:0000255" key="1">
    <source>
        <dbReference type="HAMAP-Rule" id="MF_00708"/>
    </source>
</evidence>
<reference key="1">
    <citation type="journal article" date="2005" name="Nucleic Acids Res.">
        <title>Genome dynamics and diversity of Shigella species, the etiologic agents of bacillary dysentery.</title>
        <authorList>
            <person name="Yang F."/>
            <person name="Yang J."/>
            <person name="Zhang X."/>
            <person name="Chen L."/>
            <person name="Jiang Y."/>
            <person name="Yan Y."/>
            <person name="Tang X."/>
            <person name="Wang J."/>
            <person name="Xiong Z."/>
            <person name="Dong J."/>
            <person name="Xue Y."/>
            <person name="Zhu Y."/>
            <person name="Xu X."/>
            <person name="Sun L."/>
            <person name="Chen S."/>
            <person name="Nie H."/>
            <person name="Peng J."/>
            <person name="Xu J."/>
            <person name="Wang Y."/>
            <person name="Yuan Z."/>
            <person name="Wen Y."/>
            <person name="Yao Z."/>
            <person name="Shen Y."/>
            <person name="Qiang B."/>
            <person name="Hou Y."/>
            <person name="Yu J."/>
            <person name="Jin Q."/>
        </authorList>
    </citation>
    <scope>NUCLEOTIDE SEQUENCE [LARGE SCALE GENOMIC DNA]</scope>
    <source>
        <strain>Sd197</strain>
    </source>
</reference>
<gene>
    <name evidence="1" type="primary">frdC</name>
    <name type="ordered locus">SDY_4396</name>
</gene>
<dbReference type="EMBL" id="CP000034">
    <property type="protein sequence ID" value="ABB64283.1"/>
    <property type="molecule type" value="Genomic_DNA"/>
</dbReference>
<dbReference type="RefSeq" id="WP_000208755.1">
    <property type="nucleotide sequence ID" value="NC_007606.1"/>
</dbReference>
<dbReference type="RefSeq" id="YP_405774.1">
    <property type="nucleotide sequence ID" value="NC_007606.1"/>
</dbReference>
<dbReference type="SMR" id="Q328H2"/>
<dbReference type="STRING" id="300267.SDY_4396"/>
<dbReference type="EnsemblBacteria" id="ABB64283">
    <property type="protein sequence ID" value="ABB64283"/>
    <property type="gene ID" value="SDY_4396"/>
</dbReference>
<dbReference type="KEGG" id="sdy:SDY_4396"/>
<dbReference type="PATRIC" id="fig|300267.13.peg.5192"/>
<dbReference type="HOGENOM" id="CLU_156492_0_0_6"/>
<dbReference type="Proteomes" id="UP000002716">
    <property type="component" value="Chromosome"/>
</dbReference>
<dbReference type="GO" id="GO:0045283">
    <property type="term" value="C:fumarate reductase complex"/>
    <property type="evidence" value="ECO:0007669"/>
    <property type="project" value="UniProtKB-UniRule"/>
</dbReference>
<dbReference type="GO" id="GO:0005886">
    <property type="term" value="C:plasma membrane"/>
    <property type="evidence" value="ECO:0007669"/>
    <property type="project" value="UniProtKB-SubCell"/>
</dbReference>
<dbReference type="GO" id="GO:0000104">
    <property type="term" value="F:succinate dehydrogenase activity"/>
    <property type="evidence" value="ECO:0007669"/>
    <property type="project" value="UniProtKB-UniRule"/>
</dbReference>
<dbReference type="CDD" id="cd00546">
    <property type="entry name" value="QFR_TypeD_subunitC"/>
    <property type="match status" value="1"/>
</dbReference>
<dbReference type="FunFam" id="1.20.1300.10:FF:000003">
    <property type="entry name" value="Fumarate reductase subunit C"/>
    <property type="match status" value="1"/>
</dbReference>
<dbReference type="Gene3D" id="1.20.1300.10">
    <property type="entry name" value="Fumarate reductase/succinate dehydrogenase, transmembrane subunit"/>
    <property type="match status" value="1"/>
</dbReference>
<dbReference type="HAMAP" id="MF_00708">
    <property type="entry name" value="Fumarate_red_C"/>
    <property type="match status" value="1"/>
</dbReference>
<dbReference type="InterPro" id="IPR003510">
    <property type="entry name" value="Fumarate_red_C"/>
</dbReference>
<dbReference type="InterPro" id="IPR034804">
    <property type="entry name" value="SQR/QFR_C/D"/>
</dbReference>
<dbReference type="NCBIfam" id="NF003445">
    <property type="entry name" value="PRK04987.1"/>
    <property type="match status" value="1"/>
</dbReference>
<dbReference type="Pfam" id="PF02300">
    <property type="entry name" value="Fumarate_red_C"/>
    <property type="match status" value="1"/>
</dbReference>
<dbReference type="PIRSF" id="PIRSF000180">
    <property type="entry name" value="FrdC"/>
    <property type="match status" value="1"/>
</dbReference>
<dbReference type="SUPFAM" id="SSF81343">
    <property type="entry name" value="Fumarate reductase respiratory complex transmembrane subunits"/>
    <property type="match status" value="1"/>
</dbReference>